<feature type="chain" id="PRO_0000256781" description="UPF0391 membrane protein RPB_2510">
    <location>
        <begin position="1"/>
        <end position="57"/>
    </location>
</feature>
<feature type="transmembrane region" description="Helical" evidence="1">
    <location>
        <begin position="6"/>
        <end position="26"/>
    </location>
</feature>
<feature type="transmembrane region" description="Helical" evidence="1">
    <location>
        <begin position="35"/>
        <end position="55"/>
    </location>
</feature>
<reference key="1">
    <citation type="submission" date="2006-01" db="EMBL/GenBank/DDBJ databases">
        <title>Complete sequence of Rhodopseudomonas palustris HaA2.</title>
        <authorList>
            <consortium name="US DOE Joint Genome Institute"/>
            <person name="Copeland A."/>
            <person name="Lucas S."/>
            <person name="Lapidus A."/>
            <person name="Barry K."/>
            <person name="Detter J.C."/>
            <person name="Glavina T."/>
            <person name="Hammon N."/>
            <person name="Israni S."/>
            <person name="Pitluck S."/>
            <person name="Chain P."/>
            <person name="Malfatti S."/>
            <person name="Shin M."/>
            <person name="Vergez L."/>
            <person name="Schmutz J."/>
            <person name="Larimer F."/>
            <person name="Land M."/>
            <person name="Hauser L."/>
            <person name="Pelletier D.A."/>
            <person name="Kyrpides N."/>
            <person name="Anderson I."/>
            <person name="Oda Y."/>
            <person name="Harwood C.S."/>
            <person name="Richardson P."/>
        </authorList>
    </citation>
    <scope>NUCLEOTIDE SEQUENCE [LARGE SCALE GENOMIC DNA]</scope>
    <source>
        <strain>HaA2</strain>
    </source>
</reference>
<keyword id="KW-1003">Cell membrane</keyword>
<keyword id="KW-0472">Membrane</keyword>
<keyword id="KW-1185">Reference proteome</keyword>
<keyword id="KW-0812">Transmembrane</keyword>
<keyword id="KW-1133">Transmembrane helix</keyword>
<name>Y2510_RHOP2</name>
<gene>
    <name type="ordered locus">RPB_2510</name>
</gene>
<protein>
    <recommendedName>
        <fullName evidence="1">UPF0391 membrane protein RPB_2510</fullName>
    </recommendedName>
</protein>
<organism>
    <name type="scientific">Rhodopseudomonas palustris (strain HaA2)</name>
    <dbReference type="NCBI Taxonomy" id="316058"/>
    <lineage>
        <taxon>Bacteria</taxon>
        <taxon>Pseudomonadati</taxon>
        <taxon>Pseudomonadota</taxon>
        <taxon>Alphaproteobacteria</taxon>
        <taxon>Hyphomicrobiales</taxon>
        <taxon>Nitrobacteraceae</taxon>
        <taxon>Rhodopseudomonas</taxon>
    </lineage>
</organism>
<dbReference type="EMBL" id="CP000250">
    <property type="protein sequence ID" value="ABD07215.1"/>
    <property type="molecule type" value="Genomic_DNA"/>
</dbReference>
<dbReference type="RefSeq" id="WP_011441400.1">
    <property type="nucleotide sequence ID" value="NC_007778.1"/>
</dbReference>
<dbReference type="KEGG" id="rpb:RPB_2510"/>
<dbReference type="eggNOG" id="COG5487">
    <property type="taxonomic scope" value="Bacteria"/>
</dbReference>
<dbReference type="HOGENOM" id="CLU_187346_1_1_5"/>
<dbReference type="OrthoDB" id="8021162at2"/>
<dbReference type="Proteomes" id="UP000008809">
    <property type="component" value="Chromosome"/>
</dbReference>
<dbReference type="GO" id="GO:0005886">
    <property type="term" value="C:plasma membrane"/>
    <property type="evidence" value="ECO:0007669"/>
    <property type="project" value="UniProtKB-SubCell"/>
</dbReference>
<dbReference type="HAMAP" id="MF_01361">
    <property type="entry name" value="UPF0391"/>
    <property type="match status" value="1"/>
</dbReference>
<dbReference type="InterPro" id="IPR009760">
    <property type="entry name" value="DUF1328"/>
</dbReference>
<dbReference type="NCBIfam" id="NF010232">
    <property type="entry name" value="PRK13682.2-2"/>
    <property type="match status" value="1"/>
</dbReference>
<dbReference type="NCBIfam" id="NF010234">
    <property type="entry name" value="PRK13682.2-5"/>
    <property type="match status" value="1"/>
</dbReference>
<dbReference type="Pfam" id="PF07043">
    <property type="entry name" value="DUF1328"/>
    <property type="match status" value="1"/>
</dbReference>
<dbReference type="PIRSF" id="PIRSF036466">
    <property type="entry name" value="UCP036466"/>
    <property type="match status" value="1"/>
</dbReference>
<evidence type="ECO:0000255" key="1">
    <source>
        <dbReference type="HAMAP-Rule" id="MF_01361"/>
    </source>
</evidence>
<comment type="subcellular location">
    <subcellularLocation>
        <location evidence="1">Cell membrane</location>
        <topology evidence="1">Multi-pass membrane protein</topology>
    </subcellularLocation>
</comment>
<comment type="similarity">
    <text evidence="1">Belongs to the UPF0391 family.</text>
</comment>
<proteinExistence type="inferred from homology"/>
<sequence length="57" mass="6283">MTILKWALIFLVISVIAGIFGFTGISAASADLARILFYIFAVIFIVLLILGFTIFRT</sequence>
<accession>Q2IX45</accession>